<gene>
    <name evidence="1" type="primary">mdtI</name>
    <name type="ordered locus">SeHA_C1652</name>
</gene>
<sequence>MQQFEWIHGAWLGLAIMLEIAANVLLKFSDGFRRKCYGILSLAAVLAAFSALSQAVKGIDLSVAYALWGGFGIAATLAAGWVLFGQRLNPKGWVGVILLLAGMVMIKFA</sequence>
<keyword id="KW-0997">Cell inner membrane</keyword>
<keyword id="KW-1003">Cell membrane</keyword>
<keyword id="KW-0472">Membrane</keyword>
<keyword id="KW-0812">Transmembrane</keyword>
<keyword id="KW-1133">Transmembrane helix</keyword>
<keyword id="KW-0813">Transport</keyword>
<organism>
    <name type="scientific">Salmonella heidelberg (strain SL476)</name>
    <dbReference type="NCBI Taxonomy" id="454169"/>
    <lineage>
        <taxon>Bacteria</taxon>
        <taxon>Pseudomonadati</taxon>
        <taxon>Pseudomonadota</taxon>
        <taxon>Gammaproteobacteria</taxon>
        <taxon>Enterobacterales</taxon>
        <taxon>Enterobacteriaceae</taxon>
        <taxon>Salmonella</taxon>
    </lineage>
</organism>
<name>MDTI_SALHS</name>
<comment type="function">
    <text evidence="1">Catalyzes the excretion of spermidine.</text>
</comment>
<comment type="subunit">
    <text evidence="1">Forms a complex with MdtJ.</text>
</comment>
<comment type="subcellular location">
    <subcellularLocation>
        <location evidence="1">Cell inner membrane</location>
        <topology evidence="1">Multi-pass membrane protein</topology>
    </subcellularLocation>
</comment>
<comment type="similarity">
    <text evidence="1">Belongs to the drug/metabolite transporter (DMT) superfamily. Small multidrug resistance (SMR) (TC 2.A.7.1) family. MdtI subfamily.</text>
</comment>
<protein>
    <recommendedName>
        <fullName evidence="1">Spermidine export protein MdtI</fullName>
    </recommendedName>
</protein>
<evidence type="ECO:0000255" key="1">
    <source>
        <dbReference type="HAMAP-Rule" id="MF_01597"/>
    </source>
</evidence>
<proteinExistence type="inferred from homology"/>
<dbReference type="EMBL" id="CP001120">
    <property type="protein sequence ID" value="ACF67797.1"/>
    <property type="molecule type" value="Genomic_DNA"/>
</dbReference>
<dbReference type="RefSeq" id="WP_001183821.1">
    <property type="nucleotide sequence ID" value="NC_011083.1"/>
</dbReference>
<dbReference type="SMR" id="B4THR4"/>
<dbReference type="KEGG" id="seh:SeHA_C1652"/>
<dbReference type="HOGENOM" id="CLU_133067_0_4_6"/>
<dbReference type="Proteomes" id="UP000001866">
    <property type="component" value="Chromosome"/>
</dbReference>
<dbReference type="GO" id="GO:0005886">
    <property type="term" value="C:plasma membrane"/>
    <property type="evidence" value="ECO:0007669"/>
    <property type="project" value="UniProtKB-SubCell"/>
</dbReference>
<dbReference type="GO" id="GO:0015199">
    <property type="term" value="F:amino-acid betaine transmembrane transporter activity"/>
    <property type="evidence" value="ECO:0007669"/>
    <property type="project" value="TreeGrafter"/>
</dbReference>
<dbReference type="GO" id="GO:0015297">
    <property type="term" value="F:antiporter activity"/>
    <property type="evidence" value="ECO:0007669"/>
    <property type="project" value="TreeGrafter"/>
</dbReference>
<dbReference type="GO" id="GO:0015220">
    <property type="term" value="F:choline transmembrane transporter activity"/>
    <property type="evidence" value="ECO:0007669"/>
    <property type="project" value="TreeGrafter"/>
</dbReference>
<dbReference type="GO" id="GO:0015606">
    <property type="term" value="F:spermidine transmembrane transporter activity"/>
    <property type="evidence" value="ECO:0007669"/>
    <property type="project" value="UniProtKB-UniRule"/>
</dbReference>
<dbReference type="GO" id="GO:0031460">
    <property type="term" value="P:glycine betaine transport"/>
    <property type="evidence" value="ECO:0007669"/>
    <property type="project" value="TreeGrafter"/>
</dbReference>
<dbReference type="FunFam" id="1.10.3730.20:FF:000001">
    <property type="entry name" value="Quaternary ammonium compound resistance transporter SugE"/>
    <property type="match status" value="1"/>
</dbReference>
<dbReference type="Gene3D" id="1.10.3730.20">
    <property type="match status" value="1"/>
</dbReference>
<dbReference type="HAMAP" id="MF_01597">
    <property type="entry name" value="MdtI"/>
    <property type="match status" value="1"/>
</dbReference>
<dbReference type="InterPro" id="IPR000390">
    <property type="entry name" value="Small_drug/metabolite_transptr"/>
</dbReference>
<dbReference type="InterPro" id="IPR045324">
    <property type="entry name" value="Small_multidrug_res"/>
</dbReference>
<dbReference type="InterPro" id="IPR023737">
    <property type="entry name" value="Spermidine_export_MdtI"/>
</dbReference>
<dbReference type="NCBIfam" id="NF007934">
    <property type="entry name" value="PRK10650.1"/>
    <property type="match status" value="1"/>
</dbReference>
<dbReference type="PANTHER" id="PTHR30561">
    <property type="entry name" value="SMR FAMILY PROTON-DEPENDENT DRUG EFFLUX TRANSPORTER SUGE"/>
    <property type="match status" value="1"/>
</dbReference>
<dbReference type="PANTHER" id="PTHR30561:SF6">
    <property type="entry name" value="SPERMIDINE EXPORT PROTEIN MDTI"/>
    <property type="match status" value="1"/>
</dbReference>
<dbReference type="Pfam" id="PF00893">
    <property type="entry name" value="Multi_Drug_Res"/>
    <property type="match status" value="1"/>
</dbReference>
<dbReference type="SUPFAM" id="SSF103481">
    <property type="entry name" value="Multidrug resistance efflux transporter EmrE"/>
    <property type="match status" value="1"/>
</dbReference>
<reference key="1">
    <citation type="journal article" date="2011" name="J. Bacteriol.">
        <title>Comparative genomics of 28 Salmonella enterica isolates: evidence for CRISPR-mediated adaptive sublineage evolution.</title>
        <authorList>
            <person name="Fricke W.F."/>
            <person name="Mammel M.K."/>
            <person name="McDermott P.F."/>
            <person name="Tartera C."/>
            <person name="White D.G."/>
            <person name="Leclerc J.E."/>
            <person name="Ravel J."/>
            <person name="Cebula T.A."/>
        </authorList>
    </citation>
    <scope>NUCLEOTIDE SEQUENCE [LARGE SCALE GENOMIC DNA]</scope>
    <source>
        <strain>SL476</strain>
    </source>
</reference>
<feature type="chain" id="PRO_1000197322" description="Spermidine export protein MdtI">
    <location>
        <begin position="1"/>
        <end position="109"/>
    </location>
</feature>
<feature type="transmembrane region" description="Helical" evidence="1">
    <location>
        <begin position="6"/>
        <end position="26"/>
    </location>
</feature>
<feature type="transmembrane region" description="Helical" evidence="1">
    <location>
        <begin position="36"/>
        <end position="56"/>
    </location>
</feature>
<feature type="transmembrane region" description="Helical" evidence="1">
    <location>
        <begin position="64"/>
        <end position="84"/>
    </location>
</feature>
<feature type="transmembrane region" description="Helical" evidence="1">
    <location>
        <begin position="88"/>
        <end position="108"/>
    </location>
</feature>
<accession>B4THR4</accession>